<proteinExistence type="inferred from homology"/>
<accession>Q6MUF4</accession>
<name>PHNC_MYCMS</name>
<protein>
    <recommendedName>
        <fullName evidence="1">Phosphonates import ATP-binding protein PhnC</fullName>
        <ecNumber evidence="1">7.3.2.2</ecNumber>
    </recommendedName>
</protein>
<reference key="1">
    <citation type="journal article" date="2004" name="Genome Res.">
        <title>The genome sequence of Mycoplasma mycoides subsp. mycoides SC type strain PG1T, the causative agent of contagious bovine pleuropneumonia (CBPP).</title>
        <authorList>
            <person name="Westberg J."/>
            <person name="Persson A."/>
            <person name="Holmberg A."/>
            <person name="Goesmann A."/>
            <person name="Lundeberg J."/>
            <person name="Johansson K.-E."/>
            <person name="Pettersson B."/>
            <person name="Uhlen M."/>
        </authorList>
    </citation>
    <scope>NUCLEOTIDE SEQUENCE [LARGE SCALE GENOMIC DNA]</scope>
    <source>
        <strain>CCUG 32753 / NCTC 10114 / PG1</strain>
    </source>
</reference>
<gene>
    <name evidence="1" type="primary">phnC</name>
    <name type="ordered locus">MSC_0078</name>
</gene>
<keyword id="KW-0067">ATP-binding</keyword>
<keyword id="KW-1003">Cell membrane</keyword>
<keyword id="KW-0472">Membrane</keyword>
<keyword id="KW-0547">Nucleotide-binding</keyword>
<keyword id="KW-0918">Phosphonate transport</keyword>
<keyword id="KW-1185">Reference proteome</keyword>
<keyword id="KW-1278">Translocase</keyword>
<keyword id="KW-0813">Transport</keyword>
<organism>
    <name type="scientific">Mycoplasma mycoides subsp. mycoides SC (strain CCUG 32753 / NCTC 10114 / PG1)</name>
    <dbReference type="NCBI Taxonomy" id="272632"/>
    <lineage>
        <taxon>Bacteria</taxon>
        <taxon>Bacillati</taxon>
        <taxon>Mycoplasmatota</taxon>
        <taxon>Mollicutes</taxon>
        <taxon>Mycoplasmataceae</taxon>
        <taxon>Mycoplasma</taxon>
    </lineage>
</organism>
<evidence type="ECO:0000255" key="1">
    <source>
        <dbReference type="HAMAP-Rule" id="MF_01713"/>
    </source>
</evidence>
<comment type="function">
    <text evidence="1">Part of the ABC transporter complex PhnCDE involved in phosphonates import. Responsible for energy coupling to the transport system.</text>
</comment>
<comment type="catalytic activity">
    <reaction evidence="1">
        <text>phosphonate(out) + ATP + H2O = phosphonate(in) + ADP + phosphate + H(+)</text>
        <dbReference type="Rhea" id="RHEA:18065"/>
        <dbReference type="ChEBI" id="CHEBI:15377"/>
        <dbReference type="ChEBI" id="CHEBI:15378"/>
        <dbReference type="ChEBI" id="CHEBI:16215"/>
        <dbReference type="ChEBI" id="CHEBI:30616"/>
        <dbReference type="ChEBI" id="CHEBI:43474"/>
        <dbReference type="ChEBI" id="CHEBI:456216"/>
        <dbReference type="EC" id="7.3.2.2"/>
    </reaction>
</comment>
<comment type="subunit">
    <text evidence="1">The complex is composed of two ATP-binding proteins (PhnC), two transmembrane proteins (PhnE) and a solute-binding protein (PhnD).</text>
</comment>
<comment type="subcellular location">
    <subcellularLocation>
        <location evidence="1">Cell membrane</location>
        <topology evidence="1">Peripheral membrane protein</topology>
    </subcellularLocation>
</comment>
<comment type="similarity">
    <text evidence="1">Belongs to the ABC transporter superfamily. Phosphonates importer (TC 3.A.1.9.1) family.</text>
</comment>
<sequence>MIVFNNVNKVWPNGKQVLKNINLEINKGELVAVIGLSGAGKTTLLKTINKINDISSGEILIDFDKTKEHYEVTKTRGKKLQKLRQKIGLMSQEYNNIANKTVLQNVLNARVSSQKGINKILGFFKREDKMIALNSLDKLNLLDYAYIRADNLSGGQQQRVALARTLAQQPFLIIADEPVSALDPILANQVMKDFKNINKKDGITVIINIHHVDLAKKYATRVIGLNNGEIVFDDVPSKLDAQAMKKIYGE</sequence>
<dbReference type="EC" id="7.3.2.2" evidence="1"/>
<dbReference type="EMBL" id="BX293980">
    <property type="protein sequence ID" value="CAE76730.1"/>
    <property type="molecule type" value="Genomic_DNA"/>
</dbReference>
<dbReference type="RefSeq" id="NP_975088.1">
    <property type="nucleotide sequence ID" value="NC_005364.2"/>
</dbReference>
<dbReference type="RefSeq" id="WP_011166288.1">
    <property type="nucleotide sequence ID" value="NC_005364.2"/>
</dbReference>
<dbReference type="SMR" id="Q6MUF4"/>
<dbReference type="STRING" id="272632.MSC_0078"/>
<dbReference type="KEGG" id="mmy:MSC_0078"/>
<dbReference type="PATRIC" id="fig|272632.4.peg.80"/>
<dbReference type="eggNOG" id="COG3638">
    <property type="taxonomic scope" value="Bacteria"/>
</dbReference>
<dbReference type="HOGENOM" id="CLU_000604_1_22_14"/>
<dbReference type="Proteomes" id="UP000001016">
    <property type="component" value="Chromosome"/>
</dbReference>
<dbReference type="GO" id="GO:0005886">
    <property type="term" value="C:plasma membrane"/>
    <property type="evidence" value="ECO:0007669"/>
    <property type="project" value="UniProtKB-SubCell"/>
</dbReference>
<dbReference type="GO" id="GO:0015416">
    <property type="term" value="F:ABC-type phosphonate transporter activity"/>
    <property type="evidence" value="ECO:0007669"/>
    <property type="project" value="UniProtKB-EC"/>
</dbReference>
<dbReference type="GO" id="GO:0005524">
    <property type="term" value="F:ATP binding"/>
    <property type="evidence" value="ECO:0007669"/>
    <property type="project" value="UniProtKB-KW"/>
</dbReference>
<dbReference type="GO" id="GO:0016887">
    <property type="term" value="F:ATP hydrolysis activity"/>
    <property type="evidence" value="ECO:0007669"/>
    <property type="project" value="InterPro"/>
</dbReference>
<dbReference type="CDD" id="cd03256">
    <property type="entry name" value="ABC_PhnC_transporter"/>
    <property type="match status" value="1"/>
</dbReference>
<dbReference type="Gene3D" id="3.40.50.300">
    <property type="entry name" value="P-loop containing nucleotide triphosphate hydrolases"/>
    <property type="match status" value="1"/>
</dbReference>
<dbReference type="InterPro" id="IPR003593">
    <property type="entry name" value="AAA+_ATPase"/>
</dbReference>
<dbReference type="InterPro" id="IPR003439">
    <property type="entry name" value="ABC_transporter-like_ATP-bd"/>
</dbReference>
<dbReference type="InterPro" id="IPR017871">
    <property type="entry name" value="ABC_transporter-like_CS"/>
</dbReference>
<dbReference type="InterPro" id="IPR012693">
    <property type="entry name" value="ABC_transpr_PhnC"/>
</dbReference>
<dbReference type="InterPro" id="IPR050086">
    <property type="entry name" value="MetN_ABC_transporter-like"/>
</dbReference>
<dbReference type="InterPro" id="IPR027417">
    <property type="entry name" value="P-loop_NTPase"/>
</dbReference>
<dbReference type="NCBIfam" id="TIGR02315">
    <property type="entry name" value="ABC_phnC"/>
    <property type="match status" value="1"/>
</dbReference>
<dbReference type="PANTHER" id="PTHR43166">
    <property type="entry name" value="AMINO ACID IMPORT ATP-BINDING PROTEIN"/>
    <property type="match status" value="1"/>
</dbReference>
<dbReference type="PANTHER" id="PTHR43166:SF6">
    <property type="entry name" value="PHOSPHONATES IMPORT ATP-BINDING PROTEIN PHNC"/>
    <property type="match status" value="1"/>
</dbReference>
<dbReference type="Pfam" id="PF00005">
    <property type="entry name" value="ABC_tran"/>
    <property type="match status" value="1"/>
</dbReference>
<dbReference type="SMART" id="SM00382">
    <property type="entry name" value="AAA"/>
    <property type="match status" value="1"/>
</dbReference>
<dbReference type="SUPFAM" id="SSF52540">
    <property type="entry name" value="P-loop containing nucleoside triphosphate hydrolases"/>
    <property type="match status" value="1"/>
</dbReference>
<dbReference type="PROSITE" id="PS00211">
    <property type="entry name" value="ABC_TRANSPORTER_1"/>
    <property type="match status" value="1"/>
</dbReference>
<dbReference type="PROSITE" id="PS50893">
    <property type="entry name" value="ABC_TRANSPORTER_2"/>
    <property type="match status" value="1"/>
</dbReference>
<dbReference type="PROSITE" id="PS51249">
    <property type="entry name" value="PHNC"/>
    <property type="match status" value="1"/>
</dbReference>
<feature type="chain" id="PRO_0000092714" description="Phosphonates import ATP-binding protein PhnC">
    <location>
        <begin position="1"/>
        <end position="250"/>
    </location>
</feature>
<feature type="domain" description="ABC transporter" evidence="1">
    <location>
        <begin position="2"/>
        <end position="247"/>
    </location>
</feature>
<feature type="binding site" evidence="1">
    <location>
        <begin position="35"/>
        <end position="42"/>
    </location>
    <ligand>
        <name>ATP</name>
        <dbReference type="ChEBI" id="CHEBI:30616"/>
    </ligand>
</feature>